<accession>Q0HG53</accession>
<feature type="chain" id="PRO_0000300949" description="Glutamate-1-semialdehyde 2,1-aminomutase">
    <location>
        <begin position="1"/>
        <end position="430"/>
    </location>
</feature>
<feature type="modified residue" description="N6-(pyridoxal phosphate)lysine" evidence="1">
    <location>
        <position position="265"/>
    </location>
</feature>
<organism>
    <name type="scientific">Shewanella sp. (strain MR-4)</name>
    <dbReference type="NCBI Taxonomy" id="60480"/>
    <lineage>
        <taxon>Bacteria</taxon>
        <taxon>Pseudomonadati</taxon>
        <taxon>Pseudomonadota</taxon>
        <taxon>Gammaproteobacteria</taxon>
        <taxon>Alteromonadales</taxon>
        <taxon>Shewanellaceae</taxon>
        <taxon>Shewanella</taxon>
    </lineage>
</organism>
<proteinExistence type="inferred from homology"/>
<evidence type="ECO:0000255" key="1">
    <source>
        <dbReference type="HAMAP-Rule" id="MF_00375"/>
    </source>
</evidence>
<dbReference type="EC" id="5.4.3.8" evidence="1"/>
<dbReference type="EMBL" id="CP000446">
    <property type="protein sequence ID" value="ABI39964.1"/>
    <property type="molecule type" value="Genomic_DNA"/>
</dbReference>
<dbReference type="RefSeq" id="WP_011623643.1">
    <property type="nucleotide sequence ID" value="NC_008321.1"/>
</dbReference>
<dbReference type="SMR" id="Q0HG53"/>
<dbReference type="KEGG" id="she:Shewmr4_2893"/>
<dbReference type="HOGENOM" id="CLU_016922_1_5_6"/>
<dbReference type="UniPathway" id="UPA00251">
    <property type="reaction ID" value="UER00317"/>
</dbReference>
<dbReference type="GO" id="GO:0005737">
    <property type="term" value="C:cytoplasm"/>
    <property type="evidence" value="ECO:0007669"/>
    <property type="project" value="UniProtKB-SubCell"/>
</dbReference>
<dbReference type="GO" id="GO:0042286">
    <property type="term" value="F:glutamate-1-semialdehyde 2,1-aminomutase activity"/>
    <property type="evidence" value="ECO:0007669"/>
    <property type="project" value="UniProtKB-UniRule"/>
</dbReference>
<dbReference type="GO" id="GO:0030170">
    <property type="term" value="F:pyridoxal phosphate binding"/>
    <property type="evidence" value="ECO:0007669"/>
    <property type="project" value="InterPro"/>
</dbReference>
<dbReference type="GO" id="GO:0008483">
    <property type="term" value="F:transaminase activity"/>
    <property type="evidence" value="ECO:0007669"/>
    <property type="project" value="InterPro"/>
</dbReference>
<dbReference type="GO" id="GO:0006782">
    <property type="term" value="P:protoporphyrinogen IX biosynthetic process"/>
    <property type="evidence" value="ECO:0007669"/>
    <property type="project" value="UniProtKB-UniRule"/>
</dbReference>
<dbReference type="CDD" id="cd00610">
    <property type="entry name" value="OAT_like"/>
    <property type="match status" value="1"/>
</dbReference>
<dbReference type="FunFam" id="3.40.640.10:FF:000021">
    <property type="entry name" value="Glutamate-1-semialdehyde 2,1-aminomutase"/>
    <property type="match status" value="1"/>
</dbReference>
<dbReference type="Gene3D" id="3.90.1150.10">
    <property type="entry name" value="Aspartate Aminotransferase, domain 1"/>
    <property type="match status" value="1"/>
</dbReference>
<dbReference type="Gene3D" id="3.40.640.10">
    <property type="entry name" value="Type I PLP-dependent aspartate aminotransferase-like (Major domain)"/>
    <property type="match status" value="1"/>
</dbReference>
<dbReference type="HAMAP" id="MF_00375">
    <property type="entry name" value="HemL_aminotrans_3"/>
    <property type="match status" value="1"/>
</dbReference>
<dbReference type="InterPro" id="IPR004639">
    <property type="entry name" value="4pyrrol_synth_GluAld_NH2Trfase"/>
</dbReference>
<dbReference type="InterPro" id="IPR005814">
    <property type="entry name" value="Aminotrans_3"/>
</dbReference>
<dbReference type="InterPro" id="IPR049704">
    <property type="entry name" value="Aminotrans_3_PPA_site"/>
</dbReference>
<dbReference type="InterPro" id="IPR015424">
    <property type="entry name" value="PyrdxlP-dep_Trfase"/>
</dbReference>
<dbReference type="InterPro" id="IPR015421">
    <property type="entry name" value="PyrdxlP-dep_Trfase_major"/>
</dbReference>
<dbReference type="InterPro" id="IPR015422">
    <property type="entry name" value="PyrdxlP-dep_Trfase_small"/>
</dbReference>
<dbReference type="NCBIfam" id="TIGR00713">
    <property type="entry name" value="hemL"/>
    <property type="match status" value="1"/>
</dbReference>
<dbReference type="NCBIfam" id="NF000818">
    <property type="entry name" value="PRK00062.1"/>
    <property type="match status" value="1"/>
</dbReference>
<dbReference type="PANTHER" id="PTHR43713">
    <property type="entry name" value="GLUTAMATE-1-SEMIALDEHYDE 2,1-AMINOMUTASE"/>
    <property type="match status" value="1"/>
</dbReference>
<dbReference type="PANTHER" id="PTHR43713:SF3">
    <property type="entry name" value="GLUTAMATE-1-SEMIALDEHYDE 2,1-AMINOMUTASE 1, CHLOROPLASTIC-RELATED"/>
    <property type="match status" value="1"/>
</dbReference>
<dbReference type="Pfam" id="PF00202">
    <property type="entry name" value="Aminotran_3"/>
    <property type="match status" value="1"/>
</dbReference>
<dbReference type="SUPFAM" id="SSF53383">
    <property type="entry name" value="PLP-dependent transferases"/>
    <property type="match status" value="1"/>
</dbReference>
<dbReference type="PROSITE" id="PS00600">
    <property type="entry name" value="AA_TRANSFER_CLASS_3"/>
    <property type="match status" value="1"/>
</dbReference>
<keyword id="KW-0963">Cytoplasm</keyword>
<keyword id="KW-0413">Isomerase</keyword>
<keyword id="KW-0627">Porphyrin biosynthesis</keyword>
<keyword id="KW-0663">Pyridoxal phosphate</keyword>
<name>GSA_SHESM</name>
<reference key="1">
    <citation type="submission" date="2006-08" db="EMBL/GenBank/DDBJ databases">
        <title>Complete sequence of Shewanella sp. MR-4.</title>
        <authorList>
            <consortium name="US DOE Joint Genome Institute"/>
            <person name="Copeland A."/>
            <person name="Lucas S."/>
            <person name="Lapidus A."/>
            <person name="Barry K."/>
            <person name="Detter J.C."/>
            <person name="Glavina del Rio T."/>
            <person name="Hammon N."/>
            <person name="Israni S."/>
            <person name="Dalin E."/>
            <person name="Tice H."/>
            <person name="Pitluck S."/>
            <person name="Kiss H."/>
            <person name="Brettin T."/>
            <person name="Bruce D."/>
            <person name="Han C."/>
            <person name="Tapia R."/>
            <person name="Gilna P."/>
            <person name="Schmutz J."/>
            <person name="Larimer F."/>
            <person name="Land M."/>
            <person name="Hauser L."/>
            <person name="Kyrpides N."/>
            <person name="Mikhailova N."/>
            <person name="Nealson K."/>
            <person name="Konstantinidis K."/>
            <person name="Klappenbach J."/>
            <person name="Tiedje J."/>
            <person name="Richardson P."/>
        </authorList>
    </citation>
    <scope>NUCLEOTIDE SEQUENCE [LARGE SCALE GENOMIC DNA]</scope>
    <source>
        <strain>MR-4</strain>
    </source>
</reference>
<comment type="catalytic activity">
    <reaction evidence="1">
        <text>(S)-4-amino-5-oxopentanoate = 5-aminolevulinate</text>
        <dbReference type="Rhea" id="RHEA:14265"/>
        <dbReference type="ChEBI" id="CHEBI:57501"/>
        <dbReference type="ChEBI" id="CHEBI:356416"/>
        <dbReference type="EC" id="5.4.3.8"/>
    </reaction>
</comment>
<comment type="cofactor">
    <cofactor evidence="1">
        <name>pyridoxal 5'-phosphate</name>
        <dbReference type="ChEBI" id="CHEBI:597326"/>
    </cofactor>
</comment>
<comment type="pathway">
    <text evidence="1">Porphyrin-containing compound metabolism; protoporphyrin-IX biosynthesis; 5-aminolevulinate from L-glutamyl-tRNA(Glu): step 2/2.</text>
</comment>
<comment type="subunit">
    <text evidence="1">Homodimer.</text>
</comment>
<comment type="subcellular location">
    <subcellularLocation>
        <location evidence="1">Cytoplasm</location>
    </subcellularLocation>
</comment>
<comment type="similarity">
    <text evidence="1">Belongs to the class-III pyridoxal-phosphate-dependent aminotransferase family. HemL subfamily.</text>
</comment>
<gene>
    <name evidence="1" type="primary">hemL</name>
    <name type="ordered locus">Shewmr4_2893</name>
</gene>
<sequence length="430" mass="46211">MTRSEALFEQAKKTIPGGVNSPVRAFNGVGGSPLFIEKADGAYIYDADGKAYIDYVGSWGPMILGHNHPKIREAVLAAVHNGLSFGAPTELEVQMAEKVIAMVPSIEQVRMVSSGTEATMSAIRLARGFTNRDKILKFEGCYHGHADCLLVKAGSGALTLGQPSSPGIPEDFAKHTLTAVYNDLDSVRTLFEQYPIEIACIIIEPVAGNMNCIPPIPGFLEGLRTMCDEFGALLIIDEVMTGFRVSRSGAQGHYGVTPDLTTLGKVIGGGMPVGAFGGRKDVMQFIAPTGPVYQAGTLSGNPIAMSAGLAQMEALCEEGLYEALSAKTKRIAEGFKAAADKHGIPMAINYVGGMFGFFFTEQEQITRFDQVTKCNIEHFRTFYHGMLDEGVYLAPSAYEAGFLSMAHGEEELRLTLEAADRVLARMKAAM</sequence>
<protein>
    <recommendedName>
        <fullName evidence="1">Glutamate-1-semialdehyde 2,1-aminomutase</fullName>
        <shortName evidence="1">GSA</shortName>
        <ecNumber evidence="1">5.4.3.8</ecNumber>
    </recommendedName>
    <alternativeName>
        <fullName evidence="1">Glutamate-1-semialdehyde aminotransferase</fullName>
        <shortName evidence="1">GSA-AT</shortName>
    </alternativeName>
</protein>